<protein>
    <recommendedName>
        <fullName evidence="1">Exodeoxyribonuclease 7 small subunit</fullName>
        <ecNumber evidence="1">3.1.11.6</ecNumber>
    </recommendedName>
    <alternativeName>
        <fullName evidence="1">Exodeoxyribonuclease VII small subunit</fullName>
        <shortName evidence="1">Exonuclease VII small subunit</shortName>
    </alternativeName>
</protein>
<sequence>MPSKKESYESMIKELEKIVSSMENEELPLEEAMKNYEDGVKLCDKLYKILNKAEGKIKLLTENGEEEFKKAGDSYEQ</sequence>
<gene>
    <name evidence="1" type="primary">xseB</name>
    <name type="ordered locus">CA_C2081</name>
</gene>
<dbReference type="EC" id="3.1.11.6" evidence="1"/>
<dbReference type="EMBL" id="AE001437">
    <property type="protein sequence ID" value="AAK80040.1"/>
    <property type="molecule type" value="Genomic_DNA"/>
</dbReference>
<dbReference type="PIR" id="E97156">
    <property type="entry name" value="E97156"/>
</dbReference>
<dbReference type="RefSeq" id="NP_348700.1">
    <property type="nucleotide sequence ID" value="NC_003030.1"/>
</dbReference>
<dbReference type="RefSeq" id="WP_010965381.1">
    <property type="nucleotide sequence ID" value="NC_003030.1"/>
</dbReference>
<dbReference type="SMR" id="Q97HD1"/>
<dbReference type="STRING" id="272562.CA_C2081"/>
<dbReference type="KEGG" id="cac:CA_C2081"/>
<dbReference type="PATRIC" id="fig|272562.8.peg.2284"/>
<dbReference type="eggNOG" id="COG1722">
    <property type="taxonomic scope" value="Bacteria"/>
</dbReference>
<dbReference type="HOGENOM" id="CLU_145918_3_2_9"/>
<dbReference type="OrthoDB" id="1924430at2"/>
<dbReference type="Proteomes" id="UP000000814">
    <property type="component" value="Chromosome"/>
</dbReference>
<dbReference type="GO" id="GO:0005829">
    <property type="term" value="C:cytosol"/>
    <property type="evidence" value="ECO:0007669"/>
    <property type="project" value="TreeGrafter"/>
</dbReference>
<dbReference type="GO" id="GO:0009318">
    <property type="term" value="C:exodeoxyribonuclease VII complex"/>
    <property type="evidence" value="ECO:0007669"/>
    <property type="project" value="InterPro"/>
</dbReference>
<dbReference type="GO" id="GO:0008855">
    <property type="term" value="F:exodeoxyribonuclease VII activity"/>
    <property type="evidence" value="ECO:0007669"/>
    <property type="project" value="UniProtKB-UniRule"/>
</dbReference>
<dbReference type="GO" id="GO:0006308">
    <property type="term" value="P:DNA catabolic process"/>
    <property type="evidence" value="ECO:0007669"/>
    <property type="project" value="UniProtKB-UniRule"/>
</dbReference>
<dbReference type="Gene3D" id="1.10.287.1040">
    <property type="entry name" value="Exonuclease VII, small subunit"/>
    <property type="match status" value="1"/>
</dbReference>
<dbReference type="HAMAP" id="MF_00337">
    <property type="entry name" value="Exonuc_7_S"/>
    <property type="match status" value="1"/>
</dbReference>
<dbReference type="InterPro" id="IPR003761">
    <property type="entry name" value="Exonuc_VII_S"/>
</dbReference>
<dbReference type="InterPro" id="IPR037004">
    <property type="entry name" value="Exonuc_VII_ssu_sf"/>
</dbReference>
<dbReference type="NCBIfam" id="NF002140">
    <property type="entry name" value="PRK00977.1-4"/>
    <property type="match status" value="1"/>
</dbReference>
<dbReference type="NCBIfam" id="TIGR01280">
    <property type="entry name" value="xseB"/>
    <property type="match status" value="1"/>
</dbReference>
<dbReference type="PANTHER" id="PTHR34137">
    <property type="entry name" value="EXODEOXYRIBONUCLEASE 7 SMALL SUBUNIT"/>
    <property type="match status" value="1"/>
</dbReference>
<dbReference type="PANTHER" id="PTHR34137:SF1">
    <property type="entry name" value="EXODEOXYRIBONUCLEASE 7 SMALL SUBUNIT"/>
    <property type="match status" value="1"/>
</dbReference>
<dbReference type="Pfam" id="PF02609">
    <property type="entry name" value="Exonuc_VII_S"/>
    <property type="match status" value="1"/>
</dbReference>
<dbReference type="PIRSF" id="PIRSF006488">
    <property type="entry name" value="Exonuc_VII_S"/>
    <property type="match status" value="1"/>
</dbReference>
<dbReference type="SUPFAM" id="SSF116842">
    <property type="entry name" value="XseB-like"/>
    <property type="match status" value="1"/>
</dbReference>
<accession>Q97HD1</accession>
<keyword id="KW-0963">Cytoplasm</keyword>
<keyword id="KW-0269">Exonuclease</keyword>
<keyword id="KW-0378">Hydrolase</keyword>
<keyword id="KW-0540">Nuclease</keyword>
<keyword id="KW-1185">Reference proteome</keyword>
<name>EX7S_CLOAB</name>
<evidence type="ECO:0000255" key="1">
    <source>
        <dbReference type="HAMAP-Rule" id="MF_00337"/>
    </source>
</evidence>
<evidence type="ECO:0000305" key="2"/>
<feature type="chain" id="PRO_0000206939" description="Exodeoxyribonuclease 7 small subunit">
    <location>
        <begin position="1"/>
        <end position="77"/>
    </location>
</feature>
<comment type="function">
    <text evidence="1">Bidirectionally degrades single-stranded DNA into large acid-insoluble oligonucleotides, which are then degraded further into small acid-soluble oligonucleotides.</text>
</comment>
<comment type="catalytic activity">
    <reaction evidence="1">
        <text>Exonucleolytic cleavage in either 5'- to 3'- or 3'- to 5'-direction to yield nucleoside 5'-phosphates.</text>
        <dbReference type="EC" id="3.1.11.6"/>
    </reaction>
</comment>
<comment type="subunit">
    <text evidence="1">Heterooligomer composed of large and small subunits.</text>
</comment>
<comment type="subcellular location">
    <subcellularLocation>
        <location evidence="1">Cytoplasm</location>
    </subcellularLocation>
</comment>
<comment type="similarity">
    <text evidence="1 2">Belongs to the XseB family.</text>
</comment>
<reference key="1">
    <citation type="journal article" date="2001" name="J. Bacteriol.">
        <title>Genome sequence and comparative analysis of the solvent-producing bacterium Clostridium acetobutylicum.</title>
        <authorList>
            <person name="Noelling J."/>
            <person name="Breton G."/>
            <person name="Omelchenko M.V."/>
            <person name="Makarova K.S."/>
            <person name="Zeng Q."/>
            <person name="Gibson R."/>
            <person name="Lee H.M."/>
            <person name="Dubois J."/>
            <person name="Qiu D."/>
            <person name="Hitti J."/>
            <person name="Wolf Y.I."/>
            <person name="Tatusov R.L."/>
            <person name="Sabathe F."/>
            <person name="Doucette-Stamm L.A."/>
            <person name="Soucaille P."/>
            <person name="Daly M.J."/>
            <person name="Bennett G.N."/>
            <person name="Koonin E.V."/>
            <person name="Smith D.R."/>
        </authorList>
    </citation>
    <scope>NUCLEOTIDE SEQUENCE [LARGE SCALE GENOMIC DNA]</scope>
    <source>
        <strain>ATCC 824 / DSM 792 / JCM 1419 / IAM 19013 / LMG 5710 / NBRC 13948 / NRRL B-527 / VKM B-1787 / 2291 / W</strain>
    </source>
</reference>
<organism>
    <name type="scientific">Clostridium acetobutylicum (strain ATCC 824 / DSM 792 / JCM 1419 / IAM 19013 / LMG 5710 / NBRC 13948 / NRRL B-527 / VKM B-1787 / 2291 / W)</name>
    <dbReference type="NCBI Taxonomy" id="272562"/>
    <lineage>
        <taxon>Bacteria</taxon>
        <taxon>Bacillati</taxon>
        <taxon>Bacillota</taxon>
        <taxon>Clostridia</taxon>
        <taxon>Eubacteriales</taxon>
        <taxon>Clostridiaceae</taxon>
        <taxon>Clostridium</taxon>
    </lineage>
</organism>
<proteinExistence type="inferred from homology"/>